<proteinExistence type="inferred from homology"/>
<reference key="1">
    <citation type="submission" date="2006-03" db="EMBL/GenBank/DDBJ databases">
        <title>Complete sequence of chromosome of Psychrobacter cryohalolentis K5.</title>
        <authorList>
            <consortium name="US DOE Joint Genome Institute"/>
            <person name="Copeland A."/>
            <person name="Lucas S."/>
            <person name="Lapidus A."/>
            <person name="Barry K."/>
            <person name="Detter J.C."/>
            <person name="Glavina T."/>
            <person name="Hammon N."/>
            <person name="Israni S."/>
            <person name="Dalin E."/>
            <person name="Tice H."/>
            <person name="Pitluck S."/>
            <person name="Brettin T."/>
            <person name="Bruce D."/>
            <person name="Han C."/>
            <person name="Tapia R."/>
            <person name="Sims D.R."/>
            <person name="Gilna P."/>
            <person name="Schmutz J."/>
            <person name="Larimer F."/>
            <person name="Land M."/>
            <person name="Hauser L."/>
            <person name="Kyrpides N."/>
            <person name="Kim E."/>
            <person name="Richardson P."/>
        </authorList>
    </citation>
    <scope>NUCLEOTIDE SEQUENCE [LARGE SCALE GENOMIC DNA]</scope>
    <source>
        <strain>ATCC BAA-1226 / DSM 17306 / VKM B-2378 / K5</strain>
    </source>
</reference>
<evidence type="ECO:0000255" key="1">
    <source>
        <dbReference type="HAMAP-Rule" id="MF_00658"/>
    </source>
</evidence>
<evidence type="ECO:0000305" key="2"/>
<name>RLMH_PSYCK</name>
<dbReference type="EC" id="2.1.1.177" evidence="1"/>
<dbReference type="EMBL" id="CP000323">
    <property type="protein sequence ID" value="ABE74216.1"/>
    <property type="status" value="ALT_INIT"/>
    <property type="molecule type" value="Genomic_DNA"/>
</dbReference>
<dbReference type="RefSeq" id="WP_041752952.1">
    <property type="nucleotide sequence ID" value="NC_007969.1"/>
</dbReference>
<dbReference type="SMR" id="Q1QDN7"/>
<dbReference type="STRING" id="335284.Pcryo_0433"/>
<dbReference type="KEGG" id="pcr:Pcryo_0433"/>
<dbReference type="eggNOG" id="COG1576">
    <property type="taxonomic scope" value="Bacteria"/>
</dbReference>
<dbReference type="HOGENOM" id="CLU_100552_1_0_6"/>
<dbReference type="Proteomes" id="UP000002425">
    <property type="component" value="Chromosome"/>
</dbReference>
<dbReference type="GO" id="GO:0005737">
    <property type="term" value="C:cytoplasm"/>
    <property type="evidence" value="ECO:0007669"/>
    <property type="project" value="UniProtKB-SubCell"/>
</dbReference>
<dbReference type="GO" id="GO:0070038">
    <property type="term" value="F:rRNA (pseudouridine-N3-)-methyltransferase activity"/>
    <property type="evidence" value="ECO:0007669"/>
    <property type="project" value="UniProtKB-UniRule"/>
</dbReference>
<dbReference type="CDD" id="cd18081">
    <property type="entry name" value="RlmH-like"/>
    <property type="match status" value="1"/>
</dbReference>
<dbReference type="Gene3D" id="3.40.1280.10">
    <property type="match status" value="1"/>
</dbReference>
<dbReference type="HAMAP" id="MF_00658">
    <property type="entry name" value="23SrRNA_methyltr_H"/>
    <property type="match status" value="1"/>
</dbReference>
<dbReference type="InterPro" id="IPR029028">
    <property type="entry name" value="Alpha/beta_knot_MTases"/>
</dbReference>
<dbReference type="InterPro" id="IPR003742">
    <property type="entry name" value="RlmH-like"/>
</dbReference>
<dbReference type="InterPro" id="IPR029026">
    <property type="entry name" value="tRNA_m1G_MTases_N"/>
</dbReference>
<dbReference type="NCBIfam" id="NF000986">
    <property type="entry name" value="PRK00103.1-4"/>
    <property type="match status" value="1"/>
</dbReference>
<dbReference type="NCBIfam" id="TIGR00246">
    <property type="entry name" value="tRNA_RlmH_YbeA"/>
    <property type="match status" value="1"/>
</dbReference>
<dbReference type="PANTHER" id="PTHR33603">
    <property type="entry name" value="METHYLTRANSFERASE"/>
    <property type="match status" value="1"/>
</dbReference>
<dbReference type="PANTHER" id="PTHR33603:SF1">
    <property type="entry name" value="RIBOSOMAL RNA LARGE SUBUNIT METHYLTRANSFERASE H"/>
    <property type="match status" value="1"/>
</dbReference>
<dbReference type="Pfam" id="PF02590">
    <property type="entry name" value="SPOUT_MTase"/>
    <property type="match status" value="1"/>
</dbReference>
<dbReference type="PIRSF" id="PIRSF004505">
    <property type="entry name" value="MT_bac"/>
    <property type="match status" value="1"/>
</dbReference>
<dbReference type="SUPFAM" id="SSF75217">
    <property type="entry name" value="alpha/beta knot"/>
    <property type="match status" value="1"/>
</dbReference>
<gene>
    <name evidence="1" type="primary">rlmH</name>
    <name type="ordered locus">Pcryo_0433</name>
</gene>
<sequence length="162" mass="17933">MKVRILTVGNKMPKWVQTGFDEYHKRIQPMLTTEVVEIAAAKRAKNPSDANLAQYREQEGQAILAAHAVAGREQLWVLDVKGKMLSTENLADKLSDGMQQGDDIALVIGGADGVSPEVLAKADVKWSLSALTLPHPLVRVVLMEQLYRAMSINHNHPYHRGN</sequence>
<comment type="function">
    <text evidence="1">Specifically methylates the pseudouridine at position 1915 (m3Psi1915) in 23S rRNA.</text>
</comment>
<comment type="catalytic activity">
    <reaction evidence="1">
        <text>pseudouridine(1915) in 23S rRNA + S-adenosyl-L-methionine = N(3)-methylpseudouridine(1915) in 23S rRNA + S-adenosyl-L-homocysteine + H(+)</text>
        <dbReference type="Rhea" id="RHEA:42752"/>
        <dbReference type="Rhea" id="RHEA-COMP:10221"/>
        <dbReference type="Rhea" id="RHEA-COMP:10222"/>
        <dbReference type="ChEBI" id="CHEBI:15378"/>
        <dbReference type="ChEBI" id="CHEBI:57856"/>
        <dbReference type="ChEBI" id="CHEBI:59789"/>
        <dbReference type="ChEBI" id="CHEBI:65314"/>
        <dbReference type="ChEBI" id="CHEBI:74486"/>
        <dbReference type="EC" id="2.1.1.177"/>
    </reaction>
</comment>
<comment type="subunit">
    <text evidence="1">Homodimer.</text>
</comment>
<comment type="subcellular location">
    <subcellularLocation>
        <location evidence="1">Cytoplasm</location>
    </subcellularLocation>
</comment>
<comment type="similarity">
    <text evidence="1">Belongs to the RNA methyltransferase RlmH family.</text>
</comment>
<comment type="sequence caution" evidence="2">
    <conflict type="erroneous initiation">
        <sequence resource="EMBL-CDS" id="ABE74216"/>
    </conflict>
</comment>
<accession>Q1QDN7</accession>
<keyword id="KW-0963">Cytoplasm</keyword>
<keyword id="KW-0489">Methyltransferase</keyword>
<keyword id="KW-0698">rRNA processing</keyword>
<keyword id="KW-0949">S-adenosyl-L-methionine</keyword>
<keyword id="KW-0808">Transferase</keyword>
<protein>
    <recommendedName>
        <fullName evidence="1">Ribosomal RNA large subunit methyltransferase H</fullName>
        <ecNumber evidence="1">2.1.1.177</ecNumber>
    </recommendedName>
    <alternativeName>
        <fullName evidence="1">23S rRNA (pseudouridine1915-N3)-methyltransferase</fullName>
    </alternativeName>
    <alternativeName>
        <fullName evidence="1">23S rRNA m3Psi1915 methyltransferase</fullName>
    </alternativeName>
    <alternativeName>
        <fullName evidence="1">rRNA (pseudouridine-N3-)-methyltransferase RlmH</fullName>
    </alternativeName>
</protein>
<organism>
    <name type="scientific">Psychrobacter cryohalolentis (strain ATCC BAA-1226 / DSM 17306 / VKM B-2378 / K5)</name>
    <dbReference type="NCBI Taxonomy" id="335284"/>
    <lineage>
        <taxon>Bacteria</taxon>
        <taxon>Pseudomonadati</taxon>
        <taxon>Pseudomonadota</taxon>
        <taxon>Gammaproteobacteria</taxon>
        <taxon>Moraxellales</taxon>
        <taxon>Moraxellaceae</taxon>
        <taxon>Psychrobacter</taxon>
    </lineage>
</organism>
<feature type="chain" id="PRO_0000260590" description="Ribosomal RNA large subunit methyltransferase H">
    <location>
        <begin position="1"/>
        <end position="162"/>
    </location>
</feature>
<feature type="binding site" evidence="1">
    <location>
        <position position="78"/>
    </location>
    <ligand>
        <name>S-adenosyl-L-methionine</name>
        <dbReference type="ChEBI" id="CHEBI:59789"/>
    </ligand>
</feature>
<feature type="binding site" evidence="1">
    <location>
        <position position="109"/>
    </location>
    <ligand>
        <name>S-adenosyl-L-methionine</name>
        <dbReference type="ChEBI" id="CHEBI:59789"/>
    </ligand>
</feature>
<feature type="binding site" evidence="1">
    <location>
        <begin position="128"/>
        <end position="133"/>
    </location>
    <ligand>
        <name>S-adenosyl-L-methionine</name>
        <dbReference type="ChEBI" id="CHEBI:59789"/>
    </ligand>
</feature>